<protein>
    <recommendedName>
        <fullName evidence="1">Pup--protein ligase</fullName>
        <ecNumber evidence="1">6.3.1.19</ecNumber>
    </recommendedName>
    <alternativeName>
        <fullName evidence="1">Proteasome accessory factor A</fullName>
    </alternativeName>
    <alternativeName>
        <fullName evidence="1">Pup-conjugating enzyme</fullName>
    </alternativeName>
</protein>
<evidence type="ECO:0000255" key="1">
    <source>
        <dbReference type="HAMAP-Rule" id="MF_02111"/>
    </source>
</evidence>
<proteinExistence type="inferred from homology"/>
<accession>Q2J9R8</accession>
<sequence length="454" mass="52205">MDRRIFGLENEYGVTCVFRGQRRLSPDEVARYLFRRVVSWGRSSNVFLKNGARLYLDVGSHPEYATPECDSVPDLVTHDKAGERILEGLLVEAERRLREEGIAGDIHLFKNNTDSAGNSYGCHENYLVGRHGEFSKLADVLVPFLVSRQILCGAGKVLQTPRGAVYCISQRAEHIWESVSSATTRSRPIINTRDEPHADAERFRRLHVIVGDSNMSETTMLLKLGATDLVLRMIEAGVMLRDMTLENPIRAIREVSHDMTCQRRIKLANGREVSALDIQWEYHSKAVEFVERRGGDGDEVAKRVLDLWGRTLLAIETDDLELVAREIDWVTKYVLIERFRHKHGLSLASPRVAELDLKYHDIHRDRGLYYRMERAGLVERVTRDLDVFEAKSRPPQTTRARLRGEFIKRAQEKRRDFTVDWVHLKLNDQAQRTVLCKDPFRSVDDRVDKLIASM</sequence>
<comment type="function">
    <text evidence="1">Catalyzes the covalent attachment of the prokaryotic ubiquitin-like protein modifier Pup to the proteasomal substrate proteins, thereby targeting them for proteasomal degradation. This tagging system is termed pupylation. The ligation reaction involves the side-chain carboxylate of the C-terminal glutamate of Pup and the side-chain amino group of a substrate lysine.</text>
</comment>
<comment type="catalytic activity">
    <reaction evidence="1">
        <text>ATP + [prokaryotic ubiquitin-like protein]-L-glutamate + [protein]-L-lysine = ADP + phosphate + N(6)-([prokaryotic ubiquitin-like protein]-gamma-L-glutamyl)-[protein]-L-lysine.</text>
        <dbReference type="EC" id="6.3.1.19"/>
    </reaction>
</comment>
<comment type="pathway">
    <text evidence="1">Protein degradation; proteasomal Pup-dependent pathway.</text>
</comment>
<comment type="pathway">
    <text evidence="1">Protein modification; protein pupylation.</text>
</comment>
<comment type="miscellaneous">
    <text evidence="1">The reaction mechanism probably proceeds via the activation of Pup by phosphorylation of its C-terminal glutamate, which is then subject to nucleophilic attack by the substrate lysine, resulting in an isopeptide bond and the release of phosphate as a good leaving group.</text>
</comment>
<comment type="similarity">
    <text evidence="1">Belongs to the Pup ligase/Pup deamidase family. Pup-conjugating enzyme subfamily.</text>
</comment>
<gene>
    <name evidence="1" type="primary">pafA</name>
    <name type="ordered locus">Francci3_2612</name>
</gene>
<dbReference type="EC" id="6.3.1.19" evidence="1"/>
<dbReference type="EMBL" id="CP000249">
    <property type="protein sequence ID" value="ABD11974.1"/>
    <property type="molecule type" value="Genomic_DNA"/>
</dbReference>
<dbReference type="RefSeq" id="WP_011437009.1">
    <property type="nucleotide sequence ID" value="NZ_JENI01000015.1"/>
</dbReference>
<dbReference type="SMR" id="Q2J9R8"/>
<dbReference type="STRING" id="106370.Francci3_2612"/>
<dbReference type="MEROPS" id="U72.001"/>
<dbReference type="KEGG" id="fra:Francci3_2612"/>
<dbReference type="eggNOG" id="COG0638">
    <property type="taxonomic scope" value="Bacteria"/>
</dbReference>
<dbReference type="HOGENOM" id="CLU_040524_0_1_11"/>
<dbReference type="OrthoDB" id="9760627at2"/>
<dbReference type="PhylomeDB" id="Q2J9R8"/>
<dbReference type="UniPathway" id="UPA00997"/>
<dbReference type="UniPathway" id="UPA00998"/>
<dbReference type="Proteomes" id="UP000001937">
    <property type="component" value="Chromosome"/>
</dbReference>
<dbReference type="GO" id="GO:0005524">
    <property type="term" value="F:ATP binding"/>
    <property type="evidence" value="ECO:0007669"/>
    <property type="project" value="UniProtKB-UniRule"/>
</dbReference>
<dbReference type="GO" id="GO:0016879">
    <property type="term" value="F:ligase activity, forming carbon-nitrogen bonds"/>
    <property type="evidence" value="ECO:0007669"/>
    <property type="project" value="InterPro"/>
</dbReference>
<dbReference type="GO" id="GO:0000287">
    <property type="term" value="F:magnesium ion binding"/>
    <property type="evidence" value="ECO:0007669"/>
    <property type="project" value="UniProtKB-UniRule"/>
</dbReference>
<dbReference type="GO" id="GO:0019787">
    <property type="term" value="F:ubiquitin-like protein transferase activity"/>
    <property type="evidence" value="ECO:0007669"/>
    <property type="project" value="UniProtKB-UniRule"/>
</dbReference>
<dbReference type="GO" id="GO:0019941">
    <property type="term" value="P:modification-dependent protein catabolic process"/>
    <property type="evidence" value="ECO:0007669"/>
    <property type="project" value="UniProtKB-UniRule"/>
</dbReference>
<dbReference type="GO" id="GO:0010498">
    <property type="term" value="P:proteasomal protein catabolic process"/>
    <property type="evidence" value="ECO:0007669"/>
    <property type="project" value="UniProtKB-UniRule"/>
</dbReference>
<dbReference type="GO" id="GO:0070490">
    <property type="term" value="P:protein pupylation"/>
    <property type="evidence" value="ECO:0007669"/>
    <property type="project" value="UniProtKB-UniRule"/>
</dbReference>
<dbReference type="HAMAP" id="MF_02111">
    <property type="entry name" value="Pup_ligase"/>
    <property type="match status" value="1"/>
</dbReference>
<dbReference type="InterPro" id="IPR022279">
    <property type="entry name" value="Pup_ligase"/>
</dbReference>
<dbReference type="InterPro" id="IPR004347">
    <property type="entry name" value="Pup_ligase/deamidase"/>
</dbReference>
<dbReference type="NCBIfam" id="TIGR03686">
    <property type="entry name" value="pupylate_PafA"/>
    <property type="match status" value="1"/>
</dbReference>
<dbReference type="PANTHER" id="PTHR42307">
    <property type="entry name" value="PUP DEAMIDASE/DEPUPYLASE"/>
    <property type="match status" value="1"/>
</dbReference>
<dbReference type="PANTHER" id="PTHR42307:SF3">
    <property type="entry name" value="PUP--PROTEIN LIGASE"/>
    <property type="match status" value="1"/>
</dbReference>
<dbReference type="Pfam" id="PF03136">
    <property type="entry name" value="Pup_ligase"/>
    <property type="match status" value="1"/>
</dbReference>
<dbReference type="PIRSF" id="PIRSF018077">
    <property type="entry name" value="UCP018077"/>
    <property type="match status" value="1"/>
</dbReference>
<reference key="1">
    <citation type="journal article" date="2007" name="Genome Res.">
        <title>Genome characteristics of facultatively symbiotic Frankia sp. strains reflect host range and host plant biogeography.</title>
        <authorList>
            <person name="Normand P."/>
            <person name="Lapierre P."/>
            <person name="Tisa L.S."/>
            <person name="Gogarten J.P."/>
            <person name="Alloisio N."/>
            <person name="Bagnarol E."/>
            <person name="Bassi C.A."/>
            <person name="Berry A.M."/>
            <person name="Bickhart D.M."/>
            <person name="Choisne N."/>
            <person name="Couloux A."/>
            <person name="Cournoyer B."/>
            <person name="Cruveiller S."/>
            <person name="Daubin V."/>
            <person name="Demange N."/>
            <person name="Francino M.P."/>
            <person name="Goltsman E."/>
            <person name="Huang Y."/>
            <person name="Kopp O.R."/>
            <person name="Labarre L."/>
            <person name="Lapidus A."/>
            <person name="Lavire C."/>
            <person name="Marechal J."/>
            <person name="Martinez M."/>
            <person name="Mastronunzio J.E."/>
            <person name="Mullin B.C."/>
            <person name="Niemann J."/>
            <person name="Pujic P."/>
            <person name="Rawnsley T."/>
            <person name="Rouy Z."/>
            <person name="Schenowitz C."/>
            <person name="Sellstedt A."/>
            <person name="Tavares F."/>
            <person name="Tomkins J.P."/>
            <person name="Vallenet D."/>
            <person name="Valverde C."/>
            <person name="Wall L.G."/>
            <person name="Wang Y."/>
            <person name="Medigue C."/>
            <person name="Benson D.R."/>
        </authorList>
    </citation>
    <scope>NUCLEOTIDE SEQUENCE [LARGE SCALE GENOMIC DNA]</scope>
    <source>
        <strain>DSM 45818 / CECT 9043 / HFP020203 / CcI3</strain>
    </source>
</reference>
<name>PAFA_FRACC</name>
<feature type="chain" id="PRO_0000395914" description="Pup--protein ligase">
    <location>
        <begin position="1"/>
        <end position="454"/>
    </location>
</feature>
<feature type="active site" description="Proton acceptor" evidence="1">
    <location>
        <position position="57"/>
    </location>
</feature>
<feature type="binding site" evidence="1">
    <location>
        <position position="9"/>
    </location>
    <ligand>
        <name>Mg(2+)</name>
        <dbReference type="ChEBI" id="CHEBI:18420"/>
    </ligand>
</feature>
<feature type="binding site" evidence="1">
    <location>
        <position position="53"/>
    </location>
    <ligand>
        <name>ATP</name>
        <dbReference type="ChEBI" id="CHEBI:30616"/>
    </ligand>
</feature>
<feature type="binding site" evidence="1">
    <location>
        <position position="55"/>
    </location>
    <ligand>
        <name>Mg(2+)</name>
        <dbReference type="ChEBI" id="CHEBI:18420"/>
    </ligand>
</feature>
<feature type="binding site" evidence="1">
    <location>
        <position position="63"/>
    </location>
    <ligand>
        <name>Mg(2+)</name>
        <dbReference type="ChEBI" id="CHEBI:18420"/>
    </ligand>
</feature>
<feature type="binding site" evidence="1">
    <location>
        <position position="66"/>
    </location>
    <ligand>
        <name>ATP</name>
        <dbReference type="ChEBI" id="CHEBI:30616"/>
    </ligand>
</feature>
<feature type="binding site" evidence="1">
    <location>
        <position position="421"/>
    </location>
    <ligand>
        <name>ATP</name>
        <dbReference type="ChEBI" id="CHEBI:30616"/>
    </ligand>
</feature>
<keyword id="KW-0067">ATP-binding</keyword>
<keyword id="KW-0436">Ligase</keyword>
<keyword id="KW-0460">Magnesium</keyword>
<keyword id="KW-0479">Metal-binding</keyword>
<keyword id="KW-0547">Nucleotide-binding</keyword>
<keyword id="KW-1185">Reference proteome</keyword>
<keyword id="KW-0833">Ubl conjugation pathway</keyword>
<organism>
    <name type="scientific">Frankia casuarinae (strain DSM 45818 / CECT 9043 / HFP020203 / CcI3)</name>
    <dbReference type="NCBI Taxonomy" id="106370"/>
    <lineage>
        <taxon>Bacteria</taxon>
        <taxon>Bacillati</taxon>
        <taxon>Actinomycetota</taxon>
        <taxon>Actinomycetes</taxon>
        <taxon>Frankiales</taxon>
        <taxon>Frankiaceae</taxon>
        <taxon>Frankia</taxon>
    </lineage>
</organism>